<dbReference type="EMBL" id="AC132265">
    <property type="status" value="NOT_ANNOTATED_CDS"/>
    <property type="molecule type" value="Genomic_DNA"/>
</dbReference>
<dbReference type="EMBL" id="AK032878">
    <property type="protein sequence ID" value="BAC28066.1"/>
    <property type="molecule type" value="mRNA"/>
</dbReference>
<dbReference type="CCDS" id="CCDS48620.1"/>
<dbReference type="RefSeq" id="NP_001019710.1">
    <property type="nucleotide sequence ID" value="NM_001024539.1"/>
</dbReference>
<dbReference type="SMR" id="Q8BMC3"/>
<dbReference type="BioGRID" id="229705">
    <property type="interactions" value="4"/>
</dbReference>
<dbReference type="FunCoup" id="Q8BMC3">
    <property type="interactions" value="1417"/>
</dbReference>
<dbReference type="IntAct" id="Q8BMC3">
    <property type="interactions" value="1"/>
</dbReference>
<dbReference type="MINT" id="Q8BMC3"/>
<dbReference type="STRING" id="10090.ENSMUSP00000020564"/>
<dbReference type="GlyGen" id="Q8BMC3">
    <property type="glycosylation" value="1 site, 1 N-linked glycan (1 site)"/>
</dbReference>
<dbReference type="iPTMnet" id="Q8BMC3"/>
<dbReference type="PhosphoSitePlus" id="Q8BMC3"/>
<dbReference type="PaxDb" id="10090-ENSMUSP00000129491"/>
<dbReference type="ProteomicsDB" id="261397"/>
<dbReference type="Ensembl" id="ENSMUST00000020564.7">
    <property type="protein sequence ID" value="ENSMUSP00000020564.7"/>
    <property type="gene ID" value="ENSMUSG00000020312.13"/>
</dbReference>
<dbReference type="GeneID" id="216148"/>
<dbReference type="KEGG" id="mmu:216148"/>
<dbReference type="UCSC" id="uc007fzd.2">
    <property type="organism name" value="mouse"/>
</dbReference>
<dbReference type="AGR" id="MGI:106180"/>
<dbReference type="CTD" id="25759"/>
<dbReference type="MGI" id="MGI:106180">
    <property type="gene designation" value="Shc2"/>
</dbReference>
<dbReference type="VEuPathDB" id="HostDB:ENSMUSG00000020312"/>
<dbReference type="eggNOG" id="KOG3697">
    <property type="taxonomic scope" value="Eukaryota"/>
</dbReference>
<dbReference type="GeneTree" id="ENSGT00950000182870"/>
<dbReference type="HOGENOM" id="CLU_029532_2_0_1"/>
<dbReference type="InParanoid" id="Q8BMC3"/>
<dbReference type="OMA" id="GDEWSRK"/>
<dbReference type="OrthoDB" id="9938362at2759"/>
<dbReference type="PhylomeDB" id="Q8BMC3"/>
<dbReference type="TreeFam" id="TF315807"/>
<dbReference type="Reactome" id="R-MMU-167044">
    <property type="pathway name" value="Signalling to RAS"/>
</dbReference>
<dbReference type="Reactome" id="R-MMU-4420097">
    <property type="pathway name" value="VEGFA-VEGFR2 Pathway"/>
</dbReference>
<dbReference type="Reactome" id="R-MMU-5673001">
    <property type="pathway name" value="RAF/MAP kinase cascade"/>
</dbReference>
<dbReference type="BioGRID-ORCS" id="216148">
    <property type="hits" value="0 hits in 76 CRISPR screens"/>
</dbReference>
<dbReference type="ChiTaRS" id="Shc2">
    <property type="organism name" value="mouse"/>
</dbReference>
<dbReference type="PRO" id="PR:Q8BMC3"/>
<dbReference type="Proteomes" id="UP000000589">
    <property type="component" value="Chromosome 10"/>
</dbReference>
<dbReference type="RNAct" id="Q8BMC3">
    <property type="molecule type" value="protein"/>
</dbReference>
<dbReference type="Bgee" id="ENSMUSG00000020312">
    <property type="expression patterns" value="Expressed in superior cervical ganglion and 131 other cell types or tissues"/>
</dbReference>
<dbReference type="GO" id="GO:0035556">
    <property type="term" value="P:intracellular signal transduction"/>
    <property type="evidence" value="ECO:0007669"/>
    <property type="project" value="InterPro"/>
</dbReference>
<dbReference type="CDD" id="cd01209">
    <property type="entry name" value="PTB_Shc"/>
    <property type="match status" value="1"/>
</dbReference>
<dbReference type="CDD" id="cd09925">
    <property type="entry name" value="SH2_SHC"/>
    <property type="match status" value="1"/>
</dbReference>
<dbReference type="FunFam" id="2.30.29.30:FF:000036">
    <property type="entry name" value="SHC-transforming protein 1 isoform 3"/>
    <property type="match status" value="1"/>
</dbReference>
<dbReference type="FunFam" id="3.30.505.10:FF:000005">
    <property type="entry name" value="SHC-transforming protein 1 isoform 3"/>
    <property type="match status" value="1"/>
</dbReference>
<dbReference type="Gene3D" id="2.30.29.30">
    <property type="entry name" value="Pleckstrin-homology domain (PH domain)/Phosphotyrosine-binding domain (PTB)"/>
    <property type="match status" value="1"/>
</dbReference>
<dbReference type="Gene3D" id="3.30.505.10">
    <property type="entry name" value="SH2 domain"/>
    <property type="match status" value="1"/>
</dbReference>
<dbReference type="InterPro" id="IPR051235">
    <property type="entry name" value="CEP152/SHC-Transforming"/>
</dbReference>
<dbReference type="InterPro" id="IPR011993">
    <property type="entry name" value="PH-like_dom_sf"/>
</dbReference>
<dbReference type="InterPro" id="IPR006019">
    <property type="entry name" value="PID_Shc-like"/>
</dbReference>
<dbReference type="InterPro" id="IPR006020">
    <property type="entry name" value="PTB/PI_dom"/>
</dbReference>
<dbReference type="InterPro" id="IPR000980">
    <property type="entry name" value="SH2"/>
</dbReference>
<dbReference type="InterPro" id="IPR036860">
    <property type="entry name" value="SH2_dom_sf"/>
</dbReference>
<dbReference type="InterPro" id="IPR035676">
    <property type="entry name" value="SHC_SH2"/>
</dbReference>
<dbReference type="PANTHER" id="PTHR10337">
    <property type="entry name" value="SHC TRANSFORMING PROTEIN"/>
    <property type="match status" value="1"/>
</dbReference>
<dbReference type="PANTHER" id="PTHR10337:SF5">
    <property type="entry name" value="SHC-TRANSFORMING PROTEIN 2"/>
    <property type="match status" value="1"/>
</dbReference>
<dbReference type="Pfam" id="PF00640">
    <property type="entry name" value="PID"/>
    <property type="match status" value="1"/>
</dbReference>
<dbReference type="Pfam" id="PF00017">
    <property type="entry name" value="SH2"/>
    <property type="match status" value="1"/>
</dbReference>
<dbReference type="PRINTS" id="PR00401">
    <property type="entry name" value="SH2DOMAIN"/>
</dbReference>
<dbReference type="PRINTS" id="PR00629">
    <property type="entry name" value="SHCPIDOMAIN"/>
</dbReference>
<dbReference type="SMART" id="SM00462">
    <property type="entry name" value="PTB"/>
    <property type="match status" value="1"/>
</dbReference>
<dbReference type="SMART" id="SM00252">
    <property type="entry name" value="SH2"/>
    <property type="match status" value="1"/>
</dbReference>
<dbReference type="SUPFAM" id="SSF50729">
    <property type="entry name" value="PH domain-like"/>
    <property type="match status" value="1"/>
</dbReference>
<dbReference type="SUPFAM" id="SSF55550">
    <property type="entry name" value="SH2 domain"/>
    <property type="match status" value="1"/>
</dbReference>
<dbReference type="PROSITE" id="PS01179">
    <property type="entry name" value="PID"/>
    <property type="match status" value="1"/>
</dbReference>
<dbReference type="PROSITE" id="PS50001">
    <property type="entry name" value="SH2"/>
    <property type="match status" value="1"/>
</dbReference>
<name>SHC2_MOUSE</name>
<reference key="1">
    <citation type="journal article" date="2009" name="PLoS Biol.">
        <title>Lineage-specific biology revealed by a finished genome assembly of the mouse.</title>
        <authorList>
            <person name="Church D.M."/>
            <person name="Goodstadt L."/>
            <person name="Hillier L.W."/>
            <person name="Zody M.C."/>
            <person name="Goldstein S."/>
            <person name="She X."/>
            <person name="Bult C.J."/>
            <person name="Agarwala R."/>
            <person name="Cherry J.L."/>
            <person name="DiCuccio M."/>
            <person name="Hlavina W."/>
            <person name="Kapustin Y."/>
            <person name="Meric P."/>
            <person name="Maglott D."/>
            <person name="Birtle Z."/>
            <person name="Marques A.C."/>
            <person name="Graves T."/>
            <person name="Zhou S."/>
            <person name="Teague B."/>
            <person name="Potamousis K."/>
            <person name="Churas C."/>
            <person name="Place M."/>
            <person name="Herschleb J."/>
            <person name="Runnheim R."/>
            <person name="Forrest D."/>
            <person name="Amos-Landgraf J."/>
            <person name="Schwartz D.C."/>
            <person name="Cheng Z."/>
            <person name="Lindblad-Toh K."/>
            <person name="Eichler E.E."/>
            <person name="Ponting C.P."/>
        </authorList>
    </citation>
    <scope>NUCLEOTIDE SEQUENCE [LARGE SCALE GENOMIC DNA]</scope>
    <source>
        <strain>C57BL/6J</strain>
    </source>
</reference>
<reference key="2">
    <citation type="journal article" date="2005" name="Science">
        <title>The transcriptional landscape of the mammalian genome.</title>
        <authorList>
            <person name="Carninci P."/>
            <person name="Kasukawa T."/>
            <person name="Katayama S."/>
            <person name="Gough J."/>
            <person name="Frith M.C."/>
            <person name="Maeda N."/>
            <person name="Oyama R."/>
            <person name="Ravasi T."/>
            <person name="Lenhard B."/>
            <person name="Wells C."/>
            <person name="Kodzius R."/>
            <person name="Shimokawa K."/>
            <person name="Bajic V.B."/>
            <person name="Brenner S.E."/>
            <person name="Batalov S."/>
            <person name="Forrest A.R."/>
            <person name="Zavolan M."/>
            <person name="Davis M.J."/>
            <person name="Wilming L.G."/>
            <person name="Aidinis V."/>
            <person name="Allen J.E."/>
            <person name="Ambesi-Impiombato A."/>
            <person name="Apweiler R."/>
            <person name="Aturaliya R.N."/>
            <person name="Bailey T.L."/>
            <person name="Bansal M."/>
            <person name="Baxter L."/>
            <person name="Beisel K.W."/>
            <person name="Bersano T."/>
            <person name="Bono H."/>
            <person name="Chalk A.M."/>
            <person name="Chiu K.P."/>
            <person name="Choudhary V."/>
            <person name="Christoffels A."/>
            <person name="Clutterbuck D.R."/>
            <person name="Crowe M.L."/>
            <person name="Dalla E."/>
            <person name="Dalrymple B.P."/>
            <person name="de Bono B."/>
            <person name="Della Gatta G."/>
            <person name="di Bernardo D."/>
            <person name="Down T."/>
            <person name="Engstrom P."/>
            <person name="Fagiolini M."/>
            <person name="Faulkner G."/>
            <person name="Fletcher C.F."/>
            <person name="Fukushima T."/>
            <person name="Furuno M."/>
            <person name="Futaki S."/>
            <person name="Gariboldi M."/>
            <person name="Georgii-Hemming P."/>
            <person name="Gingeras T.R."/>
            <person name="Gojobori T."/>
            <person name="Green R.E."/>
            <person name="Gustincich S."/>
            <person name="Harbers M."/>
            <person name="Hayashi Y."/>
            <person name="Hensch T.K."/>
            <person name="Hirokawa N."/>
            <person name="Hill D."/>
            <person name="Huminiecki L."/>
            <person name="Iacono M."/>
            <person name="Ikeo K."/>
            <person name="Iwama A."/>
            <person name="Ishikawa T."/>
            <person name="Jakt M."/>
            <person name="Kanapin A."/>
            <person name="Katoh M."/>
            <person name="Kawasawa Y."/>
            <person name="Kelso J."/>
            <person name="Kitamura H."/>
            <person name="Kitano H."/>
            <person name="Kollias G."/>
            <person name="Krishnan S.P."/>
            <person name="Kruger A."/>
            <person name="Kummerfeld S.K."/>
            <person name="Kurochkin I.V."/>
            <person name="Lareau L.F."/>
            <person name="Lazarevic D."/>
            <person name="Lipovich L."/>
            <person name="Liu J."/>
            <person name="Liuni S."/>
            <person name="McWilliam S."/>
            <person name="Madan Babu M."/>
            <person name="Madera M."/>
            <person name="Marchionni L."/>
            <person name="Matsuda H."/>
            <person name="Matsuzawa S."/>
            <person name="Miki H."/>
            <person name="Mignone F."/>
            <person name="Miyake S."/>
            <person name="Morris K."/>
            <person name="Mottagui-Tabar S."/>
            <person name="Mulder N."/>
            <person name="Nakano N."/>
            <person name="Nakauchi H."/>
            <person name="Ng P."/>
            <person name="Nilsson R."/>
            <person name="Nishiguchi S."/>
            <person name="Nishikawa S."/>
            <person name="Nori F."/>
            <person name="Ohara O."/>
            <person name="Okazaki Y."/>
            <person name="Orlando V."/>
            <person name="Pang K.C."/>
            <person name="Pavan W.J."/>
            <person name="Pavesi G."/>
            <person name="Pesole G."/>
            <person name="Petrovsky N."/>
            <person name="Piazza S."/>
            <person name="Reed J."/>
            <person name="Reid J.F."/>
            <person name="Ring B.Z."/>
            <person name="Ringwald M."/>
            <person name="Rost B."/>
            <person name="Ruan Y."/>
            <person name="Salzberg S.L."/>
            <person name="Sandelin A."/>
            <person name="Schneider C."/>
            <person name="Schoenbach C."/>
            <person name="Sekiguchi K."/>
            <person name="Semple C.A."/>
            <person name="Seno S."/>
            <person name="Sessa L."/>
            <person name="Sheng Y."/>
            <person name="Shibata Y."/>
            <person name="Shimada H."/>
            <person name="Shimada K."/>
            <person name="Silva D."/>
            <person name="Sinclair B."/>
            <person name="Sperling S."/>
            <person name="Stupka E."/>
            <person name="Sugiura K."/>
            <person name="Sultana R."/>
            <person name="Takenaka Y."/>
            <person name="Taki K."/>
            <person name="Tammoja K."/>
            <person name="Tan S.L."/>
            <person name="Tang S."/>
            <person name="Taylor M.S."/>
            <person name="Tegner J."/>
            <person name="Teichmann S.A."/>
            <person name="Ueda H.R."/>
            <person name="van Nimwegen E."/>
            <person name="Verardo R."/>
            <person name="Wei C.L."/>
            <person name="Yagi K."/>
            <person name="Yamanishi H."/>
            <person name="Zabarovsky E."/>
            <person name="Zhu S."/>
            <person name="Zimmer A."/>
            <person name="Hide W."/>
            <person name="Bult C."/>
            <person name="Grimmond S.M."/>
            <person name="Teasdale R.D."/>
            <person name="Liu E.T."/>
            <person name="Brusic V."/>
            <person name="Quackenbush J."/>
            <person name="Wahlestedt C."/>
            <person name="Mattick J.S."/>
            <person name="Hume D.A."/>
            <person name="Kai C."/>
            <person name="Sasaki D."/>
            <person name="Tomaru Y."/>
            <person name="Fukuda S."/>
            <person name="Kanamori-Katayama M."/>
            <person name="Suzuki M."/>
            <person name="Aoki J."/>
            <person name="Arakawa T."/>
            <person name="Iida J."/>
            <person name="Imamura K."/>
            <person name="Itoh M."/>
            <person name="Kato T."/>
            <person name="Kawaji H."/>
            <person name="Kawagashira N."/>
            <person name="Kawashima T."/>
            <person name="Kojima M."/>
            <person name="Kondo S."/>
            <person name="Konno H."/>
            <person name="Nakano K."/>
            <person name="Ninomiya N."/>
            <person name="Nishio T."/>
            <person name="Okada M."/>
            <person name="Plessy C."/>
            <person name="Shibata K."/>
            <person name="Shiraki T."/>
            <person name="Suzuki S."/>
            <person name="Tagami M."/>
            <person name="Waki K."/>
            <person name="Watahiki A."/>
            <person name="Okamura-Oho Y."/>
            <person name="Suzuki H."/>
            <person name="Kawai J."/>
            <person name="Hayashizaki Y."/>
        </authorList>
    </citation>
    <scope>NUCLEOTIDE SEQUENCE [LARGE SCALE MRNA] OF 84-573</scope>
    <source>
        <strain>C57BL/6J</strain>
        <tissue>Mesonephros</tissue>
    </source>
</reference>
<reference key="3">
    <citation type="journal article" date="2002" name="J. Biol. Chem.">
        <title>ShcB and ShcC activation by the Trk family of receptor tyrosine kinases.</title>
        <authorList>
            <person name="Liu H.Y."/>
            <person name="Meakin S.O."/>
        </authorList>
    </citation>
    <scope>PHOSPHORYLATION AT TYR-316; TYR-317 AND TYR-395</scope>
    <scope>INTERACTION WITH THE TRK RECEPTORS</scope>
</reference>
<organism>
    <name type="scientific">Mus musculus</name>
    <name type="common">Mouse</name>
    <dbReference type="NCBI Taxonomy" id="10090"/>
    <lineage>
        <taxon>Eukaryota</taxon>
        <taxon>Metazoa</taxon>
        <taxon>Chordata</taxon>
        <taxon>Craniata</taxon>
        <taxon>Vertebrata</taxon>
        <taxon>Euteleostomi</taxon>
        <taxon>Mammalia</taxon>
        <taxon>Eutheria</taxon>
        <taxon>Euarchontoglires</taxon>
        <taxon>Glires</taxon>
        <taxon>Rodentia</taxon>
        <taxon>Myomorpha</taxon>
        <taxon>Muroidea</taxon>
        <taxon>Muridae</taxon>
        <taxon>Murinae</taxon>
        <taxon>Mus</taxon>
        <taxon>Mus</taxon>
    </lineage>
</organism>
<gene>
    <name type="primary">Shc2</name>
    <name type="synonym">Sck</name>
    <name type="synonym">ShcB</name>
</gene>
<sequence>MTQGPGGRAAPEPEAPTTFCALLPRMPQWKFAAPGSFLGRGPAATRVAGVAEAQPEPGVPALAAVLGACEPRCAAPCPLPALGRCRGSGTRGARVTPDVADEWVRKGGFIHKPAHGWLHPDARVLGPGVSYIVRYMGCIEVLRSMRSLDFNTRTQVTREAINRLHEAVPGVRGSWKKKAPNKALASILGKSNLRFAGMSISVNISVDGLNLSVPATRQIIANHHMQSISFASGGDTDMTDYVAYVAKDPINQRACHILECCEGLAQSVISTVGQAFELRFKQYLHSPPKAVVPPERLTGLEELAWGDDDAAADHNYYNSIPGKEPPLGGLVDSRLAVTQPCALATLGGLGQGMTPVWRDARGLPWDMGPSGAAPPGDGYVQADARGPHDYEEHLYVNTQGLDAVELEDTAEAPLQFEDSPKKDLFDMRPFEDALKLHACSVAAGITAASPPLEDQWPSPPTRRAPIAPTEEQLRQEPWYHGRMSRRAAEKLLRADGDFLVRDSVTNPGQYVLTGMHAGQPKHLLLVDPEGVVRTKDVLFESISHLIDYHLKNGLPIVAAESELHLRGVVSREP</sequence>
<keyword id="KW-0597">Phosphoprotein</keyword>
<keyword id="KW-1185">Reference proteome</keyword>
<keyword id="KW-0727">SH2 domain</keyword>
<comment type="function">
    <text>Signaling adapter that couples activated growth factor receptors to signaling pathway in neurons. Involved in the signal transduction pathways of neurotrophin-activated Trk receptors in cortical neurons.</text>
</comment>
<comment type="subunit">
    <text evidence="1">Interacts with the Trk receptors in a phosphotyrosine-dependent manner and MEGF12. Once activated, binds to GRB2 (By similarity).</text>
</comment>
<comment type="tissue specificity">
    <text>Expressed in brain. Expressed at high level in the hypothalamus and at low level in the caudate nucleus.</text>
</comment>
<comment type="domain">
    <text evidence="1">The PID domain mediates binding to the TrkA receptor.</text>
</comment>
<comment type="PTM">
    <text evidence="4">Phosphorylated on tyrosine by the Trk receptors.</text>
</comment>
<protein>
    <recommendedName>
        <fullName>SHC-transforming protein 2</fullName>
    </recommendedName>
    <alternativeName>
        <fullName>Protein Sck</fullName>
    </alternativeName>
    <alternativeName>
        <fullName>Protein Sli</fullName>
    </alternativeName>
    <alternativeName>
        <fullName>SHC-transforming protein B</fullName>
    </alternativeName>
    <alternativeName>
        <fullName>Src homology 2 domain-containing-transforming protein C2</fullName>
        <shortName>SH2 domain protein C2</shortName>
    </alternativeName>
</protein>
<evidence type="ECO:0000250" key="1"/>
<evidence type="ECO:0000255" key="2">
    <source>
        <dbReference type="PROSITE-ProRule" id="PRU00148"/>
    </source>
</evidence>
<evidence type="ECO:0000255" key="3">
    <source>
        <dbReference type="PROSITE-ProRule" id="PRU00191"/>
    </source>
</evidence>
<evidence type="ECO:0000269" key="4">
    <source>
    </source>
</evidence>
<evidence type="ECO:0000305" key="5"/>
<evidence type="ECO:0000305" key="6">
    <source>
    </source>
</evidence>
<proteinExistence type="evidence at protein level"/>
<accession>Q8BMC3</accession>
<feature type="chain" id="PRO_0000097733" description="SHC-transforming protein 2">
    <location>
        <begin position="1"/>
        <end position="573"/>
    </location>
</feature>
<feature type="domain" description="PID" evidence="2">
    <location>
        <begin position="125"/>
        <end position="309"/>
    </location>
</feature>
<feature type="domain" description="SH2" evidence="3">
    <location>
        <begin position="478"/>
        <end position="569"/>
    </location>
</feature>
<feature type="region of interest" description="CH1">
    <location>
        <begin position="310"/>
        <end position="477"/>
    </location>
</feature>
<feature type="modified residue" description="Phosphotyrosine" evidence="6">
    <location>
        <position position="316"/>
    </location>
</feature>
<feature type="modified residue" description="Phosphotyrosine" evidence="6">
    <location>
        <position position="317"/>
    </location>
</feature>
<feature type="modified residue" description="Phosphotyrosine" evidence="6">
    <location>
        <position position="395"/>
    </location>
</feature>
<feature type="sequence conflict" description="In Ref. 2; BAC28066." evidence="5" ref="2">
    <original>RCRGSGTRGA</original>
    <variation>PGSAGAPRRP</variation>
    <location>
        <begin position="84"/>
        <end position="93"/>
    </location>
</feature>